<reference key="1">
    <citation type="journal article" date="2007" name="PLoS Genet.">
        <title>The complete genome sequence of Yersinia pseudotuberculosis IP31758, the causative agent of Far East scarlet-like fever.</title>
        <authorList>
            <person name="Eppinger M."/>
            <person name="Rosovitz M.J."/>
            <person name="Fricke W.F."/>
            <person name="Rasko D.A."/>
            <person name="Kokorina G."/>
            <person name="Fayolle C."/>
            <person name="Lindler L.E."/>
            <person name="Carniel E."/>
            <person name="Ravel J."/>
        </authorList>
    </citation>
    <scope>NUCLEOTIDE SEQUENCE [LARGE SCALE GENOMIC DNA]</scope>
    <source>
        <strain>IP 31758</strain>
    </source>
</reference>
<evidence type="ECO:0000255" key="1">
    <source>
        <dbReference type="HAMAP-Rule" id="MF_00747"/>
    </source>
</evidence>
<keyword id="KW-0067">ATP-binding</keyword>
<keyword id="KW-0963">Cytoplasm</keyword>
<keyword id="KW-0329">Glyoxylate bypass</keyword>
<keyword id="KW-0378">Hydrolase</keyword>
<keyword id="KW-0418">Kinase</keyword>
<keyword id="KW-0547">Nucleotide-binding</keyword>
<keyword id="KW-0904">Protein phosphatase</keyword>
<keyword id="KW-0723">Serine/threonine-protein kinase</keyword>
<keyword id="KW-0808">Transferase</keyword>
<keyword id="KW-0816">Tricarboxylic acid cycle</keyword>
<protein>
    <recommendedName>
        <fullName evidence="1">Isocitrate dehydrogenase kinase/phosphatase</fullName>
        <shortName evidence="1">IDH kinase/phosphatase</shortName>
        <shortName evidence="1">IDHK/P</shortName>
        <ecNumber evidence="1">2.7.11.5</ecNumber>
        <ecNumber evidence="1">3.1.3.-</ecNumber>
    </recommendedName>
</protein>
<accession>A7FDG2</accession>
<name>ACEK_YERP3</name>
<comment type="function">
    <text evidence="1">Bifunctional enzyme which can phosphorylate or dephosphorylate isocitrate dehydrogenase (IDH) on a specific serine residue. This is a regulatory mechanism which enables bacteria to bypass the Krebs cycle via the glyoxylate shunt in response to the source of carbon. When bacteria are grown on glucose, IDH is fully active and unphosphorylated, but when grown on acetate or ethanol, the activity of IDH declines drastically concomitant with its phosphorylation.</text>
</comment>
<comment type="catalytic activity">
    <reaction evidence="1">
        <text>L-seryl-[isocitrate dehydrogenase] + ATP = O-phospho-L-seryl-[isocitrate dehydrogenase] + ADP + H(+)</text>
        <dbReference type="Rhea" id="RHEA:43540"/>
        <dbReference type="Rhea" id="RHEA-COMP:10605"/>
        <dbReference type="Rhea" id="RHEA-COMP:10606"/>
        <dbReference type="ChEBI" id="CHEBI:15378"/>
        <dbReference type="ChEBI" id="CHEBI:29999"/>
        <dbReference type="ChEBI" id="CHEBI:30616"/>
        <dbReference type="ChEBI" id="CHEBI:83421"/>
        <dbReference type="ChEBI" id="CHEBI:456216"/>
        <dbReference type="EC" id="2.7.11.5"/>
    </reaction>
</comment>
<comment type="subcellular location">
    <subcellularLocation>
        <location evidence="1">Cytoplasm</location>
    </subcellularLocation>
</comment>
<comment type="similarity">
    <text evidence="1">Belongs to the AceK family.</text>
</comment>
<dbReference type="EC" id="2.7.11.5" evidence="1"/>
<dbReference type="EC" id="3.1.3.-" evidence="1"/>
<dbReference type="EMBL" id="CP000720">
    <property type="protein sequence ID" value="ABS48969.1"/>
    <property type="molecule type" value="Genomic_DNA"/>
</dbReference>
<dbReference type="RefSeq" id="WP_002212079.1">
    <property type="nucleotide sequence ID" value="NC_009708.1"/>
</dbReference>
<dbReference type="SMR" id="A7FDG2"/>
<dbReference type="GeneID" id="57974998"/>
<dbReference type="KEGG" id="ypi:YpsIP31758_0296"/>
<dbReference type="HOGENOM" id="CLU_033804_1_1_6"/>
<dbReference type="Proteomes" id="UP000002412">
    <property type="component" value="Chromosome"/>
</dbReference>
<dbReference type="GO" id="GO:0005737">
    <property type="term" value="C:cytoplasm"/>
    <property type="evidence" value="ECO:0007669"/>
    <property type="project" value="UniProtKB-SubCell"/>
</dbReference>
<dbReference type="GO" id="GO:0008772">
    <property type="term" value="F:[isocitrate dehydrogenase (NADP+)] kinase activity"/>
    <property type="evidence" value="ECO:0007669"/>
    <property type="project" value="UniProtKB-UniRule"/>
</dbReference>
<dbReference type="GO" id="GO:0016208">
    <property type="term" value="F:AMP binding"/>
    <property type="evidence" value="ECO:0007669"/>
    <property type="project" value="TreeGrafter"/>
</dbReference>
<dbReference type="GO" id="GO:0005524">
    <property type="term" value="F:ATP binding"/>
    <property type="evidence" value="ECO:0007669"/>
    <property type="project" value="UniProtKB-UniRule"/>
</dbReference>
<dbReference type="GO" id="GO:0004721">
    <property type="term" value="F:phosphoprotein phosphatase activity"/>
    <property type="evidence" value="ECO:0007669"/>
    <property type="project" value="UniProtKB-KW"/>
</dbReference>
<dbReference type="GO" id="GO:0004674">
    <property type="term" value="F:protein serine/threonine kinase activity"/>
    <property type="evidence" value="ECO:0007669"/>
    <property type="project" value="UniProtKB-KW"/>
</dbReference>
<dbReference type="GO" id="GO:0006006">
    <property type="term" value="P:glucose metabolic process"/>
    <property type="evidence" value="ECO:0007669"/>
    <property type="project" value="InterPro"/>
</dbReference>
<dbReference type="GO" id="GO:0006097">
    <property type="term" value="P:glyoxylate cycle"/>
    <property type="evidence" value="ECO:0007669"/>
    <property type="project" value="UniProtKB-UniRule"/>
</dbReference>
<dbReference type="GO" id="GO:0006099">
    <property type="term" value="P:tricarboxylic acid cycle"/>
    <property type="evidence" value="ECO:0007669"/>
    <property type="project" value="UniProtKB-UniRule"/>
</dbReference>
<dbReference type="HAMAP" id="MF_00747">
    <property type="entry name" value="AceK"/>
    <property type="match status" value="1"/>
</dbReference>
<dbReference type="InterPro" id="IPR046855">
    <property type="entry name" value="AceK_kinase"/>
</dbReference>
<dbReference type="InterPro" id="IPR046854">
    <property type="entry name" value="AceK_regulatory"/>
</dbReference>
<dbReference type="InterPro" id="IPR010452">
    <property type="entry name" value="Isocitrate_DH_AceK"/>
</dbReference>
<dbReference type="NCBIfam" id="NF002804">
    <property type="entry name" value="PRK02946.1"/>
    <property type="match status" value="1"/>
</dbReference>
<dbReference type="PANTHER" id="PTHR39559">
    <property type="match status" value="1"/>
</dbReference>
<dbReference type="PANTHER" id="PTHR39559:SF1">
    <property type="entry name" value="ISOCITRATE DEHYDROGENASE KINASE_PHOSPHATASE"/>
    <property type="match status" value="1"/>
</dbReference>
<dbReference type="Pfam" id="PF06315">
    <property type="entry name" value="AceK_kinase"/>
    <property type="match status" value="1"/>
</dbReference>
<dbReference type="Pfam" id="PF20423">
    <property type="entry name" value="AceK_regulatory"/>
    <property type="match status" value="1"/>
</dbReference>
<dbReference type="PIRSF" id="PIRSF000719">
    <property type="entry name" value="AceK"/>
    <property type="match status" value="1"/>
</dbReference>
<sequence>MVAKLEQLIAQTILQGFDAQYGRFLEVTAGAQHRFEQADWHAVQQAMKKRIHLYDHHVGLVVEQLKYITDQRHFDVEFLARVKEIYTGLLPDYPRFEIAESFFNSVYCRLFKHRDLTPDKLFVFSSQPERRFREIPRPLARDFIPKGDLSGMLQMVLNDLSLRLHWENLSRDIDYIVMAIRQAFTDEQLASAHFQIANELFYRNKAAWLVGKLRLNGDIYPFLLPIHHNESGELFIDTCLTSKAEASIVFGFARSYFMVYVPLPAAMVEWLREILPGKSTAELYTAIGCQKHGKTESYREYLAFIHQSSEQFIIAPGVKGMVMLVFTLPSFDRVFKVIKDQFAPQKEVTQARVLECYQLVKEHDRVGRMADTQEYENFVIDKHRISPELLAELQHEVPEKLEDLGDKIVIKHLYMERRMTPLNLYMEQADDQQLKDAIEEYGNAIKQLAAANIFPGDMLFKNFGVTRHGRVVFYDYDEICYMTEVNFRDIPPPRYPEDEMASEPWYSVSPNDVFPEEFRHFLCSDRKVRHFFEEMHGDLFQASYWRGLQQRIRDGHVEDVFAYRRKQRFSQRALN</sequence>
<gene>
    <name evidence="1" type="primary">aceK</name>
    <name type="ordered locus">YpsIP31758_0296</name>
</gene>
<feature type="chain" id="PRO_0000315272" description="Isocitrate dehydrogenase kinase/phosphatase">
    <location>
        <begin position="1"/>
        <end position="575"/>
    </location>
</feature>
<feature type="active site" evidence="1">
    <location>
        <position position="371"/>
    </location>
</feature>
<feature type="binding site" evidence="1">
    <location>
        <begin position="315"/>
        <end position="321"/>
    </location>
    <ligand>
        <name>ATP</name>
        <dbReference type="ChEBI" id="CHEBI:30616"/>
    </ligand>
</feature>
<feature type="binding site" evidence="1">
    <location>
        <position position="336"/>
    </location>
    <ligand>
        <name>ATP</name>
        <dbReference type="ChEBI" id="CHEBI:30616"/>
    </ligand>
</feature>
<organism>
    <name type="scientific">Yersinia pseudotuberculosis serotype O:1b (strain IP 31758)</name>
    <dbReference type="NCBI Taxonomy" id="349747"/>
    <lineage>
        <taxon>Bacteria</taxon>
        <taxon>Pseudomonadati</taxon>
        <taxon>Pseudomonadota</taxon>
        <taxon>Gammaproteobacteria</taxon>
        <taxon>Enterobacterales</taxon>
        <taxon>Yersiniaceae</taxon>
        <taxon>Yersinia</taxon>
    </lineage>
</organism>
<proteinExistence type="inferred from homology"/>